<evidence type="ECO:0000250" key="1"/>
<evidence type="ECO:0000255" key="2"/>
<evidence type="ECO:0000256" key="3">
    <source>
        <dbReference type="SAM" id="MobiDB-lite"/>
    </source>
</evidence>
<feature type="chain" id="PRO_0000235163" description="Leucine-rich repeat-containing protein 59">
    <location>
        <begin position="1"/>
        <end position="314"/>
    </location>
</feature>
<feature type="topological domain" description="Cytoplasmic" evidence="2">
    <location>
        <begin position="1"/>
        <end position="247"/>
    </location>
</feature>
<feature type="transmembrane region" description="Helical" evidence="2">
    <location>
        <begin position="248"/>
        <end position="268"/>
    </location>
</feature>
<feature type="topological domain" description="Lumenal" evidence="2">
    <location>
        <begin position="269"/>
        <end position="314"/>
    </location>
</feature>
<feature type="repeat" description="LRR 1">
    <location>
        <begin position="14"/>
        <end position="35"/>
    </location>
</feature>
<feature type="repeat" description="LRR 2">
    <location>
        <begin position="38"/>
        <end position="60"/>
    </location>
</feature>
<feature type="repeat" description="LRR 3">
    <location>
        <begin position="61"/>
        <end position="82"/>
    </location>
</feature>
<feature type="repeat" description="LRR 4">
    <location>
        <begin position="84"/>
        <end position="106"/>
    </location>
</feature>
<feature type="repeat" description="LRR 5">
    <location>
        <begin position="107"/>
        <end position="126"/>
    </location>
</feature>
<feature type="region of interest" description="Disordered" evidence="3">
    <location>
        <begin position="165"/>
        <end position="197"/>
    </location>
</feature>
<feature type="region of interest" description="Disordered" evidence="3">
    <location>
        <begin position="212"/>
        <end position="237"/>
    </location>
</feature>
<feature type="coiled-coil region" evidence="2">
    <location>
        <begin position="146"/>
        <end position="216"/>
    </location>
</feature>
<feature type="compositionally biased region" description="Basic residues" evidence="3">
    <location>
        <begin position="215"/>
        <end position="225"/>
    </location>
</feature>
<dbReference type="EMBL" id="BC067603">
    <property type="protein sequence ID" value="AAH67603.1"/>
    <property type="molecule type" value="mRNA"/>
</dbReference>
<dbReference type="RefSeq" id="NP_998097.1">
    <property type="nucleotide sequence ID" value="NM_212932.1"/>
</dbReference>
<dbReference type="SMR" id="Q6NWG1"/>
<dbReference type="BioGRID" id="90838">
    <property type="interactions" value="1"/>
</dbReference>
<dbReference type="FunCoup" id="Q6NWG1">
    <property type="interactions" value="2340"/>
</dbReference>
<dbReference type="STRING" id="7955.ENSDARP00000096361"/>
<dbReference type="PaxDb" id="7955-ENSDARP00000096361"/>
<dbReference type="GeneID" id="405868"/>
<dbReference type="KEGG" id="dre:405868"/>
<dbReference type="AGR" id="ZFIN:ZDB-GENE-040426-2547"/>
<dbReference type="CTD" id="55379"/>
<dbReference type="ZFIN" id="ZDB-GENE-040426-2547">
    <property type="gene designation" value="lrrc59"/>
</dbReference>
<dbReference type="eggNOG" id="KOG0473">
    <property type="taxonomic scope" value="Eukaryota"/>
</dbReference>
<dbReference type="InParanoid" id="Q6NWG1"/>
<dbReference type="OrthoDB" id="1394818at2759"/>
<dbReference type="PRO" id="PR:Q6NWG1"/>
<dbReference type="Proteomes" id="UP000000437">
    <property type="component" value="Alternate scaffold 12"/>
</dbReference>
<dbReference type="Proteomes" id="UP000000437">
    <property type="component" value="Chromosome 12"/>
</dbReference>
<dbReference type="GO" id="GO:0005737">
    <property type="term" value="C:cytoplasm"/>
    <property type="evidence" value="ECO:0000318"/>
    <property type="project" value="GO_Central"/>
</dbReference>
<dbReference type="GO" id="GO:0005789">
    <property type="term" value="C:endoplasmic reticulum membrane"/>
    <property type="evidence" value="ECO:0007669"/>
    <property type="project" value="UniProtKB-SubCell"/>
</dbReference>
<dbReference type="GO" id="GO:0005635">
    <property type="term" value="C:nuclear envelope"/>
    <property type="evidence" value="ECO:0007669"/>
    <property type="project" value="UniProtKB-SubCell"/>
</dbReference>
<dbReference type="GO" id="GO:0035556">
    <property type="term" value="P:intracellular signal transduction"/>
    <property type="evidence" value="ECO:0000318"/>
    <property type="project" value="GO_Central"/>
</dbReference>
<dbReference type="FunFam" id="3.80.10.10:FF:000141">
    <property type="entry name" value="Leucine-rich repeat-containing protein 59"/>
    <property type="match status" value="1"/>
</dbReference>
<dbReference type="Gene3D" id="3.80.10.10">
    <property type="entry name" value="Ribonuclease Inhibitor"/>
    <property type="match status" value="1"/>
</dbReference>
<dbReference type="InterPro" id="IPR001611">
    <property type="entry name" value="Leu-rich_rpt"/>
</dbReference>
<dbReference type="InterPro" id="IPR003591">
    <property type="entry name" value="Leu-rich_rpt_typical-subtyp"/>
</dbReference>
<dbReference type="InterPro" id="IPR032675">
    <property type="entry name" value="LRR_dom_sf"/>
</dbReference>
<dbReference type="InterPro" id="IPR050216">
    <property type="entry name" value="LRR_domain-containing"/>
</dbReference>
<dbReference type="PANTHER" id="PTHR48051">
    <property type="match status" value="1"/>
</dbReference>
<dbReference type="PANTHER" id="PTHR48051:SF42">
    <property type="entry name" value="LEUCINE-RICH REPEAT-CONTAINING PROTEIN 18-LIKE"/>
    <property type="match status" value="1"/>
</dbReference>
<dbReference type="Pfam" id="PF13855">
    <property type="entry name" value="LRR_8"/>
    <property type="match status" value="1"/>
</dbReference>
<dbReference type="SMART" id="SM00369">
    <property type="entry name" value="LRR_TYP"/>
    <property type="match status" value="3"/>
</dbReference>
<dbReference type="SUPFAM" id="SSF52058">
    <property type="entry name" value="L domain-like"/>
    <property type="match status" value="1"/>
</dbReference>
<dbReference type="PROSITE" id="PS51450">
    <property type="entry name" value="LRR"/>
    <property type="match status" value="4"/>
</dbReference>
<reference key="1">
    <citation type="submission" date="2004-03" db="EMBL/GenBank/DDBJ databases">
        <authorList>
            <consortium name="NIH - Zebrafish Gene Collection (ZGC) project"/>
        </authorList>
    </citation>
    <scope>NUCLEOTIDE SEQUENCE [LARGE SCALE MRNA]</scope>
    <source>
        <tissue>Kidney</tissue>
    </source>
</reference>
<gene>
    <name type="primary">lrrc59</name>
    <name type="ORF">zgc:85752</name>
</gene>
<sequence>MNKGKIENIKDKIDGNELDLSLSNLTEVPVKELAAFPKATFLDLSCNNLITLTPEFCSLTHLIKIDLNKNQLVCLPEEIGQLVNLQHLDLYNNKLKMLPIGFSQLKSLKWLDLKDNPLEPTLAKAAGDCLDEKQCRQCASRVLQHMKVLQEEAEKELERRLLKEREQEKKKEAKQREKEAREKEAQKKKKAEEKERKRKEYQAQVAAVAAQEQQKKKKEEKKKKAAQNQGKKAAPESVPKAKRSICSLFFSLLLKLVLLLVIGVSSVVAVCQLTELRKEAFCIPLNVHFEETVRWAQGLDVVQQVIQKMSDLRT</sequence>
<proteinExistence type="evidence at transcript level"/>
<keyword id="KW-0175">Coiled coil</keyword>
<keyword id="KW-0256">Endoplasmic reticulum</keyword>
<keyword id="KW-0433">Leucine-rich repeat</keyword>
<keyword id="KW-0472">Membrane</keyword>
<keyword id="KW-0492">Microsome</keyword>
<keyword id="KW-0539">Nucleus</keyword>
<keyword id="KW-1185">Reference proteome</keyword>
<keyword id="KW-0677">Repeat</keyword>
<keyword id="KW-0735">Signal-anchor</keyword>
<keyword id="KW-0812">Transmembrane</keyword>
<keyword id="KW-1133">Transmembrane helix</keyword>
<comment type="function">
    <text evidence="1">Required for nuclear import of FGF1.</text>
</comment>
<comment type="subunit">
    <text evidence="1">Interacts with SGO1.</text>
</comment>
<comment type="subcellular location">
    <subcellularLocation>
        <location evidence="1">Microsome membrane</location>
        <topology evidence="1">Single-pass type II membrane protein</topology>
    </subcellularLocation>
    <subcellularLocation>
        <location evidence="1">Endoplasmic reticulum membrane</location>
        <topology evidence="1">Single-pass type II membrane protein</topology>
    </subcellularLocation>
    <subcellularLocation>
        <location evidence="1">Nucleus envelope</location>
    </subcellularLocation>
    <text evidence="1">Localization in the nuclear envelope depends upon the nuclear import machinery.</text>
</comment>
<protein>
    <recommendedName>
        <fullName>Leucine-rich repeat-containing protein 59</fullName>
    </recommendedName>
</protein>
<name>LRC59_DANRE</name>
<organism>
    <name type="scientific">Danio rerio</name>
    <name type="common">Zebrafish</name>
    <name type="synonym">Brachydanio rerio</name>
    <dbReference type="NCBI Taxonomy" id="7955"/>
    <lineage>
        <taxon>Eukaryota</taxon>
        <taxon>Metazoa</taxon>
        <taxon>Chordata</taxon>
        <taxon>Craniata</taxon>
        <taxon>Vertebrata</taxon>
        <taxon>Euteleostomi</taxon>
        <taxon>Actinopterygii</taxon>
        <taxon>Neopterygii</taxon>
        <taxon>Teleostei</taxon>
        <taxon>Ostariophysi</taxon>
        <taxon>Cypriniformes</taxon>
        <taxon>Danionidae</taxon>
        <taxon>Danioninae</taxon>
        <taxon>Danio</taxon>
    </lineage>
</organism>
<accession>Q6NWG1</accession>